<sequence length="555" mass="60260">MASRKDERAAKEERAQAAAELAAKELRDVNQDRERGIKVVEHKEEVSGGPGVIGSILKSVQGTLGQAKEVVVGKAHDTAEVSRENTDYAYDKGREGGDVAAQKAEEAKEKAKMAKDTTMGKAGEYKDYTAQKAEEAKEKAAQKAEETKEKAGEYKNYTAQKAGEAKDTTLGKAGEYKDYAAQKAAEAKDTTAQKAAEAKEKTGEYKDYAAQKAAEAKVLAAQKAAEAKDTTGKDGEYKDYAAQKAAEAKDATMQKTGEYKDYAAQKTAETKDATMEKAKEYKEYAAQKAAEAKDATMQKTGEYKDYSAQKAAETKDATMEKTKEYKDYTAQKAAETKDATMEKAKEAKDTTVQKTGEYKDYAAEKAKEGKDVTVEKAKEGKDTTVGKMTELKDSAADAARKAMDMFLGKKEEVKGKAGETAEAAKEKYEDTEFAARKKMEELKLQEEGVKDEAKQRAEADRETAGDRGSAAKGTIFGAMGSVKDAIVGKLTMPSDVVKDKQQQEAVIKVDETRPGAVAEALKAADQMHGQAFNDVGKMGDEEVIVERKETRQGKM</sequence>
<name>LEAD8_DAUCA</name>
<organism>
    <name type="scientific">Daucus carota</name>
    <name type="common">Wild carrot</name>
    <dbReference type="NCBI Taxonomy" id="4039"/>
    <lineage>
        <taxon>Eukaryota</taxon>
        <taxon>Viridiplantae</taxon>
        <taxon>Streptophyta</taxon>
        <taxon>Embryophyta</taxon>
        <taxon>Tracheophyta</taxon>
        <taxon>Spermatophyta</taxon>
        <taxon>Magnoliopsida</taxon>
        <taxon>eudicotyledons</taxon>
        <taxon>Gunneridae</taxon>
        <taxon>Pentapetalae</taxon>
        <taxon>asterids</taxon>
        <taxon>campanulids</taxon>
        <taxon>Apiales</taxon>
        <taxon>Apiaceae</taxon>
        <taxon>Apioideae</taxon>
        <taxon>Scandiceae</taxon>
        <taxon>Daucinae</taxon>
        <taxon>Daucus</taxon>
        <taxon>Daucus sect. Daucus</taxon>
    </lineage>
</organism>
<accession>P20075</accession>
<evidence type="ECO:0000256" key="1">
    <source>
        <dbReference type="SAM" id="MobiDB-lite"/>
    </source>
</evidence>
<evidence type="ECO:0000305" key="2"/>
<keyword id="KW-0134">Cell wall</keyword>
<keyword id="KW-0963">Cytoplasm</keyword>
<keyword id="KW-0677">Repeat</keyword>
<keyword id="KW-0964">Secreted</keyword>
<feature type="chain" id="PRO_0000221224" description="Embryonic protein DC-8">
    <location>
        <begin position="1"/>
        <end position="555"/>
    </location>
</feature>
<feature type="repeat" description="1">
    <location>
        <begin position="97"/>
        <end position="114"/>
    </location>
</feature>
<feature type="repeat" description="2">
    <location>
        <begin position="115"/>
        <end position="125"/>
    </location>
</feature>
<feature type="repeat" description="3">
    <location>
        <begin position="126"/>
        <end position="140"/>
    </location>
</feature>
<feature type="repeat" description="4">
    <location>
        <begin position="141"/>
        <end position="154"/>
    </location>
</feature>
<feature type="repeat" description="5">
    <location>
        <begin position="155"/>
        <end position="176"/>
    </location>
</feature>
<feature type="repeat" description="6">
    <location>
        <begin position="177"/>
        <end position="191"/>
    </location>
</feature>
<feature type="repeat" description="7">
    <location>
        <begin position="192"/>
        <end position="205"/>
    </location>
</feature>
<feature type="repeat" description="8">
    <location>
        <begin position="206"/>
        <end position="216"/>
    </location>
</feature>
<feature type="repeat" description="9">
    <location>
        <begin position="217"/>
        <end position="237"/>
    </location>
</feature>
<feature type="repeat" description="10">
    <location>
        <begin position="238"/>
        <end position="259"/>
    </location>
</feature>
<feature type="repeat" description="11">
    <location>
        <begin position="260"/>
        <end position="281"/>
    </location>
</feature>
<feature type="repeat" description="12">
    <location>
        <begin position="282"/>
        <end position="303"/>
    </location>
</feature>
<feature type="repeat" description="13">
    <location>
        <begin position="304"/>
        <end position="325"/>
    </location>
</feature>
<feature type="repeat" description="14">
    <location>
        <begin position="326"/>
        <end position="343"/>
    </location>
</feature>
<feature type="repeat" description="15">
    <location>
        <begin position="344"/>
        <end position="358"/>
    </location>
</feature>
<feature type="repeat" description="16">
    <location>
        <begin position="359"/>
        <end position="376"/>
    </location>
</feature>
<feature type="repeat" description="17">
    <location>
        <begin position="377"/>
        <end position="391"/>
    </location>
</feature>
<feature type="region of interest" description="Disordered" evidence="1">
    <location>
        <begin position="83"/>
        <end position="118"/>
    </location>
</feature>
<feature type="region of interest" description="17 X approximate tandem repeats">
    <location>
        <begin position="97"/>
        <end position="391"/>
    </location>
</feature>
<feature type="region of interest" description="Disordered" evidence="1">
    <location>
        <begin position="132"/>
        <end position="151"/>
    </location>
</feature>
<feature type="region of interest" description="Disordered" evidence="1">
    <location>
        <begin position="184"/>
        <end position="204"/>
    </location>
</feature>
<feature type="region of interest" description="Disordered" evidence="1">
    <location>
        <begin position="444"/>
        <end position="472"/>
    </location>
</feature>
<feature type="compositionally biased region" description="Basic and acidic residues" evidence="1">
    <location>
        <begin position="83"/>
        <end position="115"/>
    </location>
</feature>
<feature type="compositionally biased region" description="Basic and acidic residues" evidence="1">
    <location>
        <begin position="444"/>
        <end position="465"/>
    </location>
</feature>
<protein>
    <recommendedName>
        <fullName>Embryonic protein DC-8</fullName>
    </recommendedName>
</protein>
<dbReference type="EMBL" id="X16131">
    <property type="protein sequence ID" value="CAA34258.2"/>
    <property type="molecule type" value="Genomic_DNA"/>
</dbReference>
<dbReference type="PIR" id="S04909">
    <property type="entry name" value="S04909"/>
</dbReference>
<dbReference type="SMR" id="P20075"/>
<dbReference type="GO" id="GO:0005829">
    <property type="term" value="C:cytosol"/>
    <property type="evidence" value="ECO:0007669"/>
    <property type="project" value="TreeGrafter"/>
</dbReference>
<dbReference type="GO" id="GO:0005576">
    <property type="term" value="C:extracellular region"/>
    <property type="evidence" value="ECO:0007669"/>
    <property type="project" value="UniProtKB-KW"/>
</dbReference>
<dbReference type="GO" id="GO:0009631">
    <property type="term" value="P:cold acclimation"/>
    <property type="evidence" value="ECO:0007669"/>
    <property type="project" value="TreeGrafter"/>
</dbReference>
<dbReference type="Gene3D" id="6.10.140.1430">
    <property type="match status" value="5"/>
</dbReference>
<dbReference type="InterPro" id="IPR004238">
    <property type="entry name" value="ECP63-like_dom"/>
</dbReference>
<dbReference type="PANTHER" id="PTHR47877">
    <property type="entry name" value="LATE EMBRYOGENESIS ABUNDANT DOMAIN-CONTAINING PROTEIN / LEA DOMAIN-CONTAINING PROTEIN"/>
    <property type="match status" value="1"/>
</dbReference>
<dbReference type="PANTHER" id="PTHR47877:SF4">
    <property type="entry name" value="LATE EMBRYOGENESIS ABUNDANT PROTEIN ECP63"/>
    <property type="match status" value="1"/>
</dbReference>
<dbReference type="Pfam" id="PF02987">
    <property type="entry name" value="LEA_4"/>
    <property type="match status" value="4"/>
</dbReference>
<comment type="function">
    <text>May play a role in late embryogeny.</text>
</comment>
<comment type="subcellular location">
    <subcellularLocation>
        <location>Cytoplasm</location>
    </subcellularLocation>
    <subcellularLocation>
        <location>Secreted</location>
        <location>Cell wall</location>
    </subcellularLocation>
    <text>Cytoplasmic, protein bodies, and cell walls of zygotic embryo and endosperm tissue.</text>
</comment>
<comment type="similarity">
    <text evidence="2">Belongs to the LEA type 4 family.</text>
</comment>
<proteinExistence type="inferred from homology"/>
<reference key="1">
    <citation type="journal article" date="1989" name="Mol. Gen. Genet.">
        <title>Molecular and genetic analysis of an embryonic gene, DC 8, from Daucus carota L.</title>
        <authorList>
            <person name="Franz G."/>
            <person name="Hatzopoulos P."/>
            <person name="Jones T.J."/>
            <person name="Krauss M."/>
            <person name="Sung Z.R."/>
        </authorList>
    </citation>
    <scope>NUCLEOTIDE SEQUENCE [GENOMIC DNA]</scope>
    <source>
        <strain>cv. Queen Anne's Lace</strain>
    </source>
</reference>